<reference key="1">
    <citation type="journal article" date="2005" name="Nature">
        <title>The map-based sequence of the rice genome.</title>
        <authorList>
            <consortium name="International rice genome sequencing project (IRGSP)"/>
        </authorList>
    </citation>
    <scope>NUCLEOTIDE SEQUENCE [LARGE SCALE GENOMIC DNA]</scope>
    <source>
        <strain>cv. Nipponbare</strain>
    </source>
</reference>
<reference key="2">
    <citation type="journal article" date="2008" name="Nucleic Acids Res.">
        <title>The rice annotation project database (RAP-DB): 2008 update.</title>
        <authorList>
            <consortium name="The rice annotation project (RAP)"/>
        </authorList>
    </citation>
    <scope>GENOME REANNOTATION</scope>
    <source>
        <strain>cv. Nipponbare</strain>
    </source>
</reference>
<reference key="3">
    <citation type="journal article" date="2013" name="Rice">
        <title>Improvement of the Oryza sativa Nipponbare reference genome using next generation sequence and optical map data.</title>
        <authorList>
            <person name="Kawahara Y."/>
            <person name="de la Bastide M."/>
            <person name="Hamilton J.P."/>
            <person name="Kanamori H."/>
            <person name="McCombie W.R."/>
            <person name="Ouyang S."/>
            <person name="Schwartz D.C."/>
            <person name="Tanaka T."/>
            <person name="Wu J."/>
            <person name="Zhou S."/>
            <person name="Childs K.L."/>
            <person name="Davidson R.M."/>
            <person name="Lin H."/>
            <person name="Quesada-Ocampo L."/>
            <person name="Vaillancourt B."/>
            <person name="Sakai H."/>
            <person name="Lee S.S."/>
            <person name="Kim J."/>
            <person name="Numa H."/>
            <person name="Itoh T."/>
            <person name="Buell C.R."/>
            <person name="Matsumoto T."/>
        </authorList>
    </citation>
    <scope>GENOME REANNOTATION</scope>
    <source>
        <strain>cv. Nipponbare</strain>
    </source>
</reference>
<reference key="4">
    <citation type="journal article" date="2008" name="Plant Mol. Biol.">
        <title>ROLLED LEAF 9, encoding a GARP protein, regulates the leaf abaxial cell fate in rice.</title>
        <authorList>
            <person name="Yan S."/>
            <person name="Yan C.J."/>
            <person name="Zeng X.H."/>
            <person name="Yang Y.C."/>
            <person name="Fang Y.W."/>
            <person name="Tian C.Y."/>
            <person name="Sun Y.W."/>
            <person name="Cheng Z.K."/>
            <person name="Gu M.H."/>
        </authorList>
    </citation>
    <scope>NUCLEOTIDE SEQUENCE [MRNA] OF 156-532</scope>
    <scope>FUNCTION</scope>
    <scope>SUBCELLULAR LOCATION</scope>
    <scope>TISSUE SPECIFICITY</scope>
    <scope>DISRUPTION PHENOTYPE</scope>
    <source>
        <strain>cv. Nipponbare</strain>
    </source>
</reference>
<reference key="5">
    <citation type="journal article" date="2009" name="Plant Cell">
        <title>SHALLOT-LIKE1 is a KANADI transcription factor that modulates rice leaf rolling by regulating leaf abaxial cell development.</title>
        <authorList>
            <person name="Zhang G.H."/>
            <person name="Xu Q."/>
            <person name="Zhu X.D."/>
            <person name="Qian Q."/>
            <person name="Xue H.W."/>
        </authorList>
    </citation>
    <scope>FUNCTION</scope>
    <scope>TISSUE SPECIFICITY</scope>
    <scope>DISRUPTION PHENOTYPE</scope>
</reference>
<comment type="function">
    <text evidence="3 4">Probable transcription factor that regulates abaxial identity during leaf development (PubMed:18594992). Modulates leaf rolling by regulating the programmed cell death (PCD) of abaxial mesophyll and sclerenchyma cells during leaf development (PubMed:19304938).</text>
</comment>
<comment type="subcellular location">
    <subcellularLocation>
        <location evidence="3">Nucleus</location>
    </subcellularLocation>
</comment>
<comment type="tissue specificity">
    <text evidence="3 4">Expressed in roots, stems, leaves and flowers (PubMed:18594992). Expressed in stems, anthers of young or mature flowers, pistil tips, glumes, vascular tissues of mature seeds, coleoptile and embryonic root of germinating seedlings, root vascular tissues, leaf veins and leaf sheaths, guard cells, and leaf tracheal elements (PubMed:19304938).</text>
</comment>
<comment type="disruption phenotype">
    <text evidence="3 4">Rolled inward leaves like a cylinder at mature stage (PubMed:18594992). Narrow, extremely rolled and dark-green leaves (PubMed:19304938). Malformed spikelets with low seed sets (PubMed:18594992). Slight delay in heading date (PubMed:18594992). Disordered and irregular arrangement of chloroplast grana lamellae (PubMed:18594992). Abnormal sclerenchymatous cell development in the abaxial cell layers, altered mesophyll cell distribution, increased amounts of chlorophyll, and enhanced photosynthesis (PubMed:19304938). Altered seed morphology, and reduced root number and root length (PubMed:19304938).</text>
</comment>
<comment type="sequence caution" evidence="7">
    <conflict type="erroneous gene model prediction">
        <sequence resource="EMBL-CDS" id="BAD26455"/>
    </conflict>
</comment>
<comment type="sequence caution" evidence="7">
    <conflict type="erroneous gene model prediction">
        <sequence resource="EMBL-CDS" id="BAF25011"/>
    </conflict>
</comment>
<comment type="sequence caution" evidence="7">
    <conflict type="erroneous gene model prediction">
        <sequence resource="EMBL-CDS" id="BAT07930"/>
    </conflict>
</comment>
<accession>Q0J235</accession>
<accession>A0A0N7KQR2</accession>
<accession>B6V8F2</accession>
<accession>Q6H494</accession>
<name>ROLL9_ORYSJ</name>
<organism>
    <name type="scientific">Oryza sativa subsp. japonica</name>
    <name type="common">Rice</name>
    <dbReference type="NCBI Taxonomy" id="39947"/>
    <lineage>
        <taxon>Eukaryota</taxon>
        <taxon>Viridiplantae</taxon>
        <taxon>Streptophyta</taxon>
        <taxon>Embryophyta</taxon>
        <taxon>Tracheophyta</taxon>
        <taxon>Spermatophyta</taxon>
        <taxon>Magnoliopsida</taxon>
        <taxon>Liliopsida</taxon>
        <taxon>Poales</taxon>
        <taxon>Poaceae</taxon>
        <taxon>BOP clade</taxon>
        <taxon>Oryzoideae</taxon>
        <taxon>Oryzeae</taxon>
        <taxon>Oryzinae</taxon>
        <taxon>Oryza</taxon>
        <taxon>Oryza sativa</taxon>
    </lineage>
</organism>
<keyword id="KW-0217">Developmental protein</keyword>
<keyword id="KW-0221">Differentiation</keyword>
<keyword id="KW-0238">DNA-binding</keyword>
<keyword id="KW-0539">Nucleus</keyword>
<keyword id="KW-1185">Reference proteome</keyword>
<keyword id="KW-0804">Transcription</keyword>
<keyword id="KW-0805">Transcription regulation</keyword>
<feature type="chain" id="PRO_0000408384" description="Probable transcription factor RL9">
    <location>
        <begin position="1"/>
        <end position="532"/>
    </location>
</feature>
<feature type="domain" description="HTH myb-type" evidence="1">
    <location>
        <begin position="321"/>
        <end position="381"/>
    </location>
</feature>
<feature type="DNA-binding region" description="H-T-H motif" evidence="1">
    <location>
        <begin position="352"/>
        <end position="377"/>
    </location>
</feature>
<feature type="region of interest" description="Disordered" evidence="2">
    <location>
        <begin position="93"/>
        <end position="143"/>
    </location>
</feature>
<feature type="region of interest" description="Disordered" evidence="2">
    <location>
        <begin position="224"/>
        <end position="244"/>
    </location>
</feature>
<feature type="region of interest" description="Disordered" evidence="2">
    <location>
        <begin position="380"/>
        <end position="409"/>
    </location>
</feature>
<feature type="region of interest" description="Disordered" evidence="2">
    <location>
        <begin position="438"/>
        <end position="478"/>
    </location>
</feature>
<feature type="region of interest" description="Disordered" evidence="2">
    <location>
        <begin position="492"/>
        <end position="532"/>
    </location>
</feature>
<feature type="compositionally biased region" description="Gly residues" evidence="2">
    <location>
        <begin position="119"/>
        <end position="128"/>
    </location>
</feature>
<feature type="compositionally biased region" description="Low complexity" evidence="2">
    <location>
        <begin position="453"/>
        <end position="471"/>
    </location>
</feature>
<feature type="compositionally biased region" description="Polar residues" evidence="2">
    <location>
        <begin position="501"/>
        <end position="517"/>
    </location>
</feature>
<gene>
    <name evidence="5" type="primary">RL9</name>
    <name evidence="6" type="synonym">SLL1</name>
    <name evidence="9" type="ordered locus">Os09g0395300</name>
    <name evidence="7" type="ordered locus">LOC_Os09g23200</name>
    <name evidence="8" type="ORF">B1040D06.24</name>
</gene>
<proteinExistence type="evidence at transcript level"/>
<dbReference type="EMBL" id="AP005904">
    <property type="protein sequence ID" value="BAD26455.1"/>
    <property type="status" value="ALT_SEQ"/>
    <property type="molecule type" value="Genomic_DNA"/>
</dbReference>
<dbReference type="EMBL" id="AP008215">
    <property type="protein sequence ID" value="BAF25011.1"/>
    <property type="status" value="ALT_SEQ"/>
    <property type="molecule type" value="Genomic_DNA"/>
</dbReference>
<dbReference type="EMBL" id="AP014965">
    <property type="protein sequence ID" value="BAT07930.1"/>
    <property type="status" value="ALT_SEQ"/>
    <property type="molecule type" value="Genomic_DNA"/>
</dbReference>
<dbReference type="EMBL" id="FJ268747">
    <property type="protein sequence ID" value="ACJ02361.1"/>
    <property type="molecule type" value="Genomic_DNA"/>
</dbReference>
<dbReference type="EMBL" id="FJ268748">
    <property type="protein sequence ID" value="ACJ02362.1"/>
    <property type="molecule type" value="mRNA"/>
</dbReference>
<dbReference type="SMR" id="Q0J235"/>
<dbReference type="FunCoup" id="Q0J235">
    <property type="interactions" value="111"/>
</dbReference>
<dbReference type="STRING" id="39947.Q0J235"/>
<dbReference type="PaxDb" id="39947-Q0J235"/>
<dbReference type="KEGG" id="dosa:Os09g0395300"/>
<dbReference type="eggNOG" id="ENOG502QQZR">
    <property type="taxonomic scope" value="Eukaryota"/>
</dbReference>
<dbReference type="HOGENOM" id="CLU_047766_4_1_1"/>
<dbReference type="InParanoid" id="Q0J235"/>
<dbReference type="PlantReactome" id="R-OSA-9627657">
    <property type="pathway name" value="Regulation of leaf development"/>
</dbReference>
<dbReference type="Proteomes" id="UP000000763">
    <property type="component" value="Chromosome 9"/>
</dbReference>
<dbReference type="Proteomes" id="UP000059680">
    <property type="component" value="Chromosome 9"/>
</dbReference>
<dbReference type="GO" id="GO:0005634">
    <property type="term" value="C:nucleus"/>
    <property type="evidence" value="ECO:0000314"/>
    <property type="project" value="UniProtKB"/>
</dbReference>
<dbReference type="GO" id="GO:0000976">
    <property type="term" value="F:transcription cis-regulatory region binding"/>
    <property type="evidence" value="ECO:0000318"/>
    <property type="project" value="GO_Central"/>
</dbReference>
<dbReference type="GO" id="GO:0010158">
    <property type="term" value="P:abaxial cell fate specification"/>
    <property type="evidence" value="ECO:0000315"/>
    <property type="project" value="UniProtKB"/>
</dbReference>
<dbReference type="GO" id="GO:0010229">
    <property type="term" value="P:inflorescence development"/>
    <property type="evidence" value="ECO:0000315"/>
    <property type="project" value="UniProtKB"/>
</dbReference>
<dbReference type="GO" id="GO:0006355">
    <property type="term" value="P:regulation of DNA-templated transcription"/>
    <property type="evidence" value="ECO:0000318"/>
    <property type="project" value="GO_Central"/>
</dbReference>
<dbReference type="FunFam" id="1.10.10.60:FF:000002">
    <property type="entry name" value="Myb family transcription factor"/>
    <property type="match status" value="1"/>
</dbReference>
<dbReference type="Gene3D" id="1.10.10.60">
    <property type="entry name" value="Homeodomain-like"/>
    <property type="match status" value="1"/>
</dbReference>
<dbReference type="InterPro" id="IPR009057">
    <property type="entry name" value="Homeodomain-like_sf"/>
</dbReference>
<dbReference type="InterPro" id="IPR044847">
    <property type="entry name" value="KAN_fam"/>
</dbReference>
<dbReference type="InterPro" id="IPR006447">
    <property type="entry name" value="Myb_dom_plants"/>
</dbReference>
<dbReference type="InterPro" id="IPR001005">
    <property type="entry name" value="SANT/Myb"/>
</dbReference>
<dbReference type="NCBIfam" id="TIGR01557">
    <property type="entry name" value="myb_SHAQKYF"/>
    <property type="match status" value="1"/>
</dbReference>
<dbReference type="PANTHER" id="PTHR31496">
    <property type="entry name" value="TRANSCRIPTION FACTOR KAN2-RELATED"/>
    <property type="match status" value="1"/>
</dbReference>
<dbReference type="PANTHER" id="PTHR31496:SF3">
    <property type="entry name" value="TRANSCRIPTION REPRESSOR KAN1"/>
    <property type="match status" value="1"/>
</dbReference>
<dbReference type="Pfam" id="PF00249">
    <property type="entry name" value="Myb_DNA-binding"/>
    <property type="match status" value="1"/>
</dbReference>
<dbReference type="SUPFAM" id="SSF46689">
    <property type="entry name" value="Homeodomain-like"/>
    <property type="match status" value="1"/>
</dbReference>
<protein>
    <recommendedName>
        <fullName evidence="7">Probable transcription factor RL9</fullName>
    </recommendedName>
    <alternativeName>
        <fullName evidence="5">Protein ROLLED LEAF 9</fullName>
    </alternativeName>
    <alternativeName>
        <fullName evidence="6">Protein SHALLOT-LIKE 1</fullName>
    </alternativeName>
</protein>
<sequence length="532" mass="54267">MAMVRELELMTSWSNSMGRHRYPTRILVDSFGHKCSASDKGVWTSCSIRAPLQGRGSFRRGANIRFGSLPSSAAVATSGGGRGGGGVVVGGGGGDPWRRLDGSTASTELSLSPPPAQAAGGGGGGGGADALPWRHRPSPPSSAVATTSAAAAAALMAPMMLQPLDAGGGASAPPPPIRGIPIYNGPGGFPFLQPSPTAGDVGHHHHHHPKMGFYSSYHHPSTWPSTSPSPLAAPPGAASSPLDPTAAFLSSPHHRMLSAASGRLNGMLSVSDTLRSYGVPGAAAPGVIGGAHHHHHHLHGGQPFVGALASRFMPKLPAKRSMRAPRMRWTSTLHARFVHAVELLGGHERATPKSVLELMDVKDLTLAHVKSHLQMYRTVKSTDKPAASSGPADGGSGDEEFAGGGQAASGGGDSMCLRGGGGGGVAAAAFAEHGRSASEGAASSVGGGGGGDMDQSSAGNTSTTRWSNSSRDPWLSSNSCNMDAHRSVGLSSPIENLEPCRSSSSQVSNHELSSPSLEFTLGRPDWHGADHD</sequence>
<evidence type="ECO:0000255" key="1">
    <source>
        <dbReference type="PROSITE-ProRule" id="PRU00625"/>
    </source>
</evidence>
<evidence type="ECO:0000256" key="2">
    <source>
        <dbReference type="SAM" id="MobiDB-lite"/>
    </source>
</evidence>
<evidence type="ECO:0000269" key="3">
    <source>
    </source>
</evidence>
<evidence type="ECO:0000269" key="4">
    <source>
    </source>
</evidence>
<evidence type="ECO:0000303" key="5">
    <source>
    </source>
</evidence>
<evidence type="ECO:0000303" key="6">
    <source>
    </source>
</evidence>
<evidence type="ECO:0000305" key="7"/>
<evidence type="ECO:0000312" key="8">
    <source>
        <dbReference type="EMBL" id="BAD26455.1"/>
    </source>
</evidence>
<evidence type="ECO:0000312" key="9">
    <source>
        <dbReference type="EMBL" id="BAT07930.1"/>
    </source>
</evidence>